<accession>Q2A1U9</accession>
<sequence length="609" mass="66677">MANMIDKIDLKSQGSSNLSGEMTNHQKVGTLYKRLLLQVKHLWHFLLLAAIGSIFFSAADASMIYLINPILNYGFGPGGGITKQSATILMLMGVGMVGLLALRSVGSFVSQYFIGSLGQKVVYKFRKDIYKRLMGLPASFFDKHSTGQIISRLLYNVDQVTEATSTAIITVVQDGTFVIGLIVVMFVSSWQLSLFLIVVGPFLGLFISIINKKFRNLSRNTQSSMGNVTHTAEETIRNYKEIRIFGAQQKQQNKFFKNLDYTYSQQIRTIALDALTSPVIQIIASLVLAFSLFTIAIFGTNEGDGSSWLTAGSFASFFAAAAAILKPIKNLTKVNVVIQKAVAATEDIFYILDYPAEKETGSKELAKVDGNVTIKDLSFAFGEHKVLSGVSVDIKAGQTVAFVGKSGSGKTTLTSIISRFYTQHEGEILLDGVDTRELTLENLRSHLSIVSQNVHLFDDTVYNNIAFGLSREVSEEEVIDALKRANAYEFVQELSDGINTNIGNNGSKLSGGQRQRISIARALLKNAPVLIFDEATSALDNESERVVQQALESLTKSCTTIVIAHRLSTVENADKIVVMDGGMVVESGKHQELLEQGGLYTRLYQSGLQ</sequence>
<gene>
    <name evidence="1" type="primary">msbA</name>
    <name type="ordered locus">FTL_1668</name>
</gene>
<organism>
    <name type="scientific">Francisella tularensis subsp. holarctica (strain LVS)</name>
    <dbReference type="NCBI Taxonomy" id="376619"/>
    <lineage>
        <taxon>Bacteria</taxon>
        <taxon>Pseudomonadati</taxon>
        <taxon>Pseudomonadota</taxon>
        <taxon>Gammaproteobacteria</taxon>
        <taxon>Thiotrichales</taxon>
        <taxon>Francisellaceae</taxon>
        <taxon>Francisella</taxon>
    </lineage>
</organism>
<protein>
    <recommendedName>
        <fullName evidence="1">ATP-dependent lipid A-core flippase</fullName>
        <ecNumber evidence="1">7.5.2.6</ecNumber>
    </recommendedName>
    <alternativeName>
        <fullName evidence="1">Lipid A export ATP-binding/permease protein MsbA</fullName>
    </alternativeName>
</protein>
<dbReference type="EC" id="7.5.2.6" evidence="1"/>
<dbReference type="EMBL" id="AM233362">
    <property type="protein sequence ID" value="CAJ80107.1"/>
    <property type="molecule type" value="Genomic_DNA"/>
</dbReference>
<dbReference type="RefSeq" id="WP_003017108.1">
    <property type="nucleotide sequence ID" value="NZ_CP009694.1"/>
</dbReference>
<dbReference type="SMR" id="Q2A1U9"/>
<dbReference type="KEGG" id="ftl:FTL_1668"/>
<dbReference type="Proteomes" id="UP000001944">
    <property type="component" value="Chromosome"/>
</dbReference>
<dbReference type="GO" id="GO:0005886">
    <property type="term" value="C:plasma membrane"/>
    <property type="evidence" value="ECO:0007669"/>
    <property type="project" value="UniProtKB-SubCell"/>
</dbReference>
<dbReference type="GO" id="GO:0140359">
    <property type="term" value="F:ABC-type transporter activity"/>
    <property type="evidence" value="ECO:0007669"/>
    <property type="project" value="InterPro"/>
</dbReference>
<dbReference type="GO" id="GO:0005524">
    <property type="term" value="F:ATP binding"/>
    <property type="evidence" value="ECO:0007669"/>
    <property type="project" value="UniProtKB-KW"/>
</dbReference>
<dbReference type="GO" id="GO:0016887">
    <property type="term" value="F:ATP hydrolysis activity"/>
    <property type="evidence" value="ECO:0007669"/>
    <property type="project" value="InterPro"/>
</dbReference>
<dbReference type="GO" id="GO:0034040">
    <property type="term" value="F:ATPase-coupled lipid transmembrane transporter activity"/>
    <property type="evidence" value="ECO:0007669"/>
    <property type="project" value="InterPro"/>
</dbReference>
<dbReference type="CDD" id="cd18552">
    <property type="entry name" value="ABC_6TM_MsbA_like"/>
    <property type="match status" value="1"/>
</dbReference>
<dbReference type="FunFam" id="3.40.50.300:FF:000140">
    <property type="entry name" value="Lipid A export ATP-binding/permease protein MsbA"/>
    <property type="match status" value="1"/>
</dbReference>
<dbReference type="Gene3D" id="1.20.1560.10">
    <property type="entry name" value="ABC transporter type 1, transmembrane domain"/>
    <property type="match status" value="1"/>
</dbReference>
<dbReference type="Gene3D" id="3.40.50.300">
    <property type="entry name" value="P-loop containing nucleotide triphosphate hydrolases"/>
    <property type="match status" value="1"/>
</dbReference>
<dbReference type="InterPro" id="IPR003593">
    <property type="entry name" value="AAA+_ATPase"/>
</dbReference>
<dbReference type="InterPro" id="IPR011527">
    <property type="entry name" value="ABC1_TM_dom"/>
</dbReference>
<dbReference type="InterPro" id="IPR036640">
    <property type="entry name" value="ABC1_TM_sf"/>
</dbReference>
<dbReference type="InterPro" id="IPR003439">
    <property type="entry name" value="ABC_transporter-like_ATP-bd"/>
</dbReference>
<dbReference type="InterPro" id="IPR017871">
    <property type="entry name" value="ABC_transporter-like_CS"/>
</dbReference>
<dbReference type="InterPro" id="IPR011917">
    <property type="entry name" value="ABC_transpr_lipidA"/>
</dbReference>
<dbReference type="InterPro" id="IPR027417">
    <property type="entry name" value="P-loop_NTPase"/>
</dbReference>
<dbReference type="InterPro" id="IPR039421">
    <property type="entry name" value="Type_1_exporter"/>
</dbReference>
<dbReference type="NCBIfam" id="TIGR02203">
    <property type="entry name" value="MsbA_lipidA"/>
    <property type="match status" value="1"/>
</dbReference>
<dbReference type="PANTHER" id="PTHR24221">
    <property type="entry name" value="ATP-BINDING CASSETTE SUB-FAMILY B"/>
    <property type="match status" value="1"/>
</dbReference>
<dbReference type="PANTHER" id="PTHR24221:SF632">
    <property type="entry name" value="ATP-DEPENDENT LIPID A-CORE FLIPPASE"/>
    <property type="match status" value="1"/>
</dbReference>
<dbReference type="Pfam" id="PF00664">
    <property type="entry name" value="ABC_membrane"/>
    <property type="match status" value="1"/>
</dbReference>
<dbReference type="Pfam" id="PF00005">
    <property type="entry name" value="ABC_tran"/>
    <property type="match status" value="1"/>
</dbReference>
<dbReference type="SMART" id="SM00382">
    <property type="entry name" value="AAA"/>
    <property type="match status" value="1"/>
</dbReference>
<dbReference type="SUPFAM" id="SSF90123">
    <property type="entry name" value="ABC transporter transmembrane region"/>
    <property type="match status" value="1"/>
</dbReference>
<dbReference type="SUPFAM" id="SSF52540">
    <property type="entry name" value="P-loop containing nucleoside triphosphate hydrolases"/>
    <property type="match status" value="1"/>
</dbReference>
<dbReference type="PROSITE" id="PS50929">
    <property type="entry name" value="ABC_TM1F"/>
    <property type="match status" value="1"/>
</dbReference>
<dbReference type="PROSITE" id="PS00211">
    <property type="entry name" value="ABC_TRANSPORTER_1"/>
    <property type="match status" value="1"/>
</dbReference>
<dbReference type="PROSITE" id="PS50893">
    <property type="entry name" value="ABC_TRANSPORTER_2"/>
    <property type="match status" value="1"/>
</dbReference>
<dbReference type="PROSITE" id="PS51239">
    <property type="entry name" value="MSBA"/>
    <property type="match status" value="1"/>
</dbReference>
<evidence type="ECO:0000255" key="1">
    <source>
        <dbReference type="HAMAP-Rule" id="MF_01703"/>
    </source>
</evidence>
<proteinExistence type="inferred from homology"/>
<feature type="chain" id="PRO_0000271625" description="ATP-dependent lipid A-core flippase">
    <location>
        <begin position="1"/>
        <end position="609"/>
    </location>
</feature>
<feature type="transmembrane region" description="Helical" evidence="1">
    <location>
        <begin position="47"/>
        <end position="67"/>
    </location>
</feature>
<feature type="transmembrane region" description="Helical" evidence="1">
    <location>
        <begin position="88"/>
        <end position="108"/>
    </location>
</feature>
<feature type="transmembrane region" description="Helical" evidence="1">
    <location>
        <begin position="167"/>
        <end position="187"/>
    </location>
</feature>
<feature type="transmembrane region" description="Helical" evidence="1">
    <location>
        <begin position="190"/>
        <end position="210"/>
    </location>
</feature>
<feature type="transmembrane region" description="Helical" evidence="1">
    <location>
        <begin position="279"/>
        <end position="299"/>
    </location>
</feature>
<feature type="transmembrane region" description="Helical" evidence="1">
    <location>
        <begin position="305"/>
        <end position="325"/>
    </location>
</feature>
<feature type="domain" description="ABC transmembrane type-1" evidence="1">
    <location>
        <begin position="47"/>
        <end position="340"/>
    </location>
</feature>
<feature type="domain" description="ABC transporter" evidence="1">
    <location>
        <begin position="372"/>
        <end position="606"/>
    </location>
</feature>
<feature type="binding site" evidence="1">
    <location>
        <begin position="404"/>
        <end position="411"/>
    </location>
    <ligand>
        <name>ATP</name>
        <dbReference type="ChEBI" id="CHEBI:30616"/>
    </ligand>
</feature>
<comment type="function">
    <text evidence="1">Involved in lipopolysaccharide (LPS) biosynthesis. Translocates lipid A-core from the inner to the outer leaflet of the inner membrane. Transmembrane domains (TMD) form a pore in the inner membrane and the ATP-binding domain (NBD) is responsible for energy generation.</text>
</comment>
<comment type="catalytic activity">
    <reaction evidence="1">
        <text>ATP + H2O + lipid A-core oligosaccharideSide 1 = ADP + phosphate + lipid A-core oligosaccharideSide 2.</text>
        <dbReference type="EC" id="7.5.2.6"/>
    </reaction>
</comment>
<comment type="subunit">
    <text evidence="1">Homodimer.</text>
</comment>
<comment type="subcellular location">
    <subcellularLocation>
        <location evidence="1">Cell inner membrane</location>
        <topology evidence="1">Multi-pass membrane protein</topology>
    </subcellularLocation>
</comment>
<comment type="domain">
    <text evidence="1">In MsbA the ATP-binding domain (NBD) and the transmembrane domain (TMD) are fused.</text>
</comment>
<comment type="similarity">
    <text evidence="1">Belongs to the ABC transporter superfamily. Lipid exporter (TC 3.A.1.106) family.</text>
</comment>
<name>MSBA_FRATH</name>
<keyword id="KW-0067">ATP-binding</keyword>
<keyword id="KW-0997">Cell inner membrane</keyword>
<keyword id="KW-1003">Cell membrane</keyword>
<keyword id="KW-0445">Lipid transport</keyword>
<keyword id="KW-0472">Membrane</keyword>
<keyword id="KW-0547">Nucleotide-binding</keyword>
<keyword id="KW-1185">Reference proteome</keyword>
<keyword id="KW-1278">Translocase</keyword>
<keyword id="KW-0812">Transmembrane</keyword>
<keyword id="KW-1133">Transmembrane helix</keyword>
<keyword id="KW-0813">Transport</keyword>
<reference key="1">
    <citation type="submission" date="2006-03" db="EMBL/GenBank/DDBJ databases">
        <title>Complete genome sequence of Francisella tularensis LVS (Live Vaccine Strain).</title>
        <authorList>
            <person name="Chain P."/>
            <person name="Larimer F."/>
            <person name="Land M."/>
            <person name="Stilwagen S."/>
            <person name="Larsson P."/>
            <person name="Bearden S."/>
            <person name="Chu M."/>
            <person name="Oyston P."/>
            <person name="Forsman M."/>
            <person name="Andersson S."/>
            <person name="Lindler L."/>
            <person name="Titball R."/>
            <person name="Garcia E."/>
        </authorList>
    </citation>
    <scope>NUCLEOTIDE SEQUENCE [LARGE SCALE GENOMIC DNA]</scope>
    <source>
        <strain>LVS</strain>
    </source>
</reference>